<proteinExistence type="inferred from homology"/>
<protein>
    <recommendedName>
        <fullName evidence="1">Thiamine thiazole synthase</fullName>
        <ecNumber evidence="1">2.4.2.59</ecNumber>
    </recommendedName>
</protein>
<comment type="function">
    <text evidence="1">Involved in the biosynthesis of the thiazole moiety of thiamine. Catalyzes the conversion of NAD and glycine to adenosine diphosphate 5-(2-hydroxyethyl)-4-methylthiazole-2-carboxylate (ADT), an adenylated thiazole intermediate, using free sulfide as a source of sulfur.</text>
</comment>
<comment type="catalytic activity">
    <reaction evidence="1">
        <text>hydrogen sulfide + glycine + NAD(+) = ADP-5-ethyl-4-methylthiazole-2-carboxylate + nicotinamide + 3 H2O + H(+)</text>
        <dbReference type="Rhea" id="RHEA:55704"/>
        <dbReference type="ChEBI" id="CHEBI:15377"/>
        <dbReference type="ChEBI" id="CHEBI:15378"/>
        <dbReference type="ChEBI" id="CHEBI:17154"/>
        <dbReference type="ChEBI" id="CHEBI:29919"/>
        <dbReference type="ChEBI" id="CHEBI:57305"/>
        <dbReference type="ChEBI" id="CHEBI:57540"/>
        <dbReference type="ChEBI" id="CHEBI:139151"/>
        <dbReference type="EC" id="2.4.2.59"/>
    </reaction>
</comment>
<comment type="cofactor">
    <cofactor evidence="1">
        <name>Fe(2+)</name>
        <dbReference type="ChEBI" id="CHEBI:29033"/>
    </cofactor>
</comment>
<comment type="pathway">
    <text evidence="1">Cofactor biosynthesis; thiamine diphosphate biosynthesis.</text>
</comment>
<comment type="subunit">
    <text evidence="1">Homooctamer; tetramer of dimers.</text>
</comment>
<comment type="similarity">
    <text evidence="1">Belongs to the THI4 family.</text>
</comment>
<dbReference type="EC" id="2.4.2.59" evidence="1"/>
<dbReference type="EMBL" id="CP000077">
    <property type="protein sequence ID" value="AAY80221.1"/>
    <property type="molecule type" value="Genomic_DNA"/>
</dbReference>
<dbReference type="RefSeq" id="WP_011277723.1">
    <property type="nucleotide sequence ID" value="NC_007181.1"/>
</dbReference>
<dbReference type="SMR" id="Q4JAF8"/>
<dbReference type="STRING" id="330779.Saci_0854"/>
<dbReference type="GeneID" id="14551367"/>
<dbReference type="KEGG" id="sai:Saci_0854"/>
<dbReference type="PATRIC" id="fig|330779.12.peg.818"/>
<dbReference type="eggNOG" id="arCOG00574">
    <property type="taxonomic scope" value="Archaea"/>
</dbReference>
<dbReference type="HOGENOM" id="CLU_053727_2_0_2"/>
<dbReference type="UniPathway" id="UPA00060"/>
<dbReference type="Proteomes" id="UP000001018">
    <property type="component" value="Chromosome"/>
</dbReference>
<dbReference type="GO" id="GO:0005506">
    <property type="term" value="F:iron ion binding"/>
    <property type="evidence" value="ECO:0007669"/>
    <property type="project" value="UniProtKB-UniRule"/>
</dbReference>
<dbReference type="GO" id="GO:0016763">
    <property type="term" value="F:pentosyltransferase activity"/>
    <property type="evidence" value="ECO:0007669"/>
    <property type="project" value="UniProtKB-UniRule"/>
</dbReference>
<dbReference type="GO" id="GO:0009228">
    <property type="term" value="P:thiamine biosynthetic process"/>
    <property type="evidence" value="ECO:0007669"/>
    <property type="project" value="UniProtKB-KW"/>
</dbReference>
<dbReference type="GO" id="GO:0009229">
    <property type="term" value="P:thiamine diphosphate biosynthetic process"/>
    <property type="evidence" value="ECO:0007669"/>
    <property type="project" value="UniProtKB-UniRule"/>
</dbReference>
<dbReference type="GO" id="GO:0052837">
    <property type="term" value="P:thiazole biosynthetic process"/>
    <property type="evidence" value="ECO:0007669"/>
    <property type="project" value="UniProtKB-UniRule"/>
</dbReference>
<dbReference type="Gene3D" id="3.50.50.60">
    <property type="entry name" value="FAD/NAD(P)-binding domain"/>
    <property type="match status" value="1"/>
</dbReference>
<dbReference type="HAMAP" id="MF_00304">
    <property type="entry name" value="Thi4"/>
    <property type="match status" value="1"/>
</dbReference>
<dbReference type="InterPro" id="IPR036188">
    <property type="entry name" value="FAD/NAD-bd_sf"/>
</dbReference>
<dbReference type="InterPro" id="IPR002922">
    <property type="entry name" value="Thi4_fam"/>
</dbReference>
<dbReference type="InterPro" id="IPR022828">
    <property type="entry name" value="Thi4_prok"/>
</dbReference>
<dbReference type="NCBIfam" id="TIGR00292">
    <property type="entry name" value="sulfide-dependent adenosine diphosphate thiazole synthase"/>
    <property type="match status" value="1"/>
</dbReference>
<dbReference type="PANTHER" id="PTHR43422">
    <property type="entry name" value="THIAMINE THIAZOLE SYNTHASE"/>
    <property type="match status" value="1"/>
</dbReference>
<dbReference type="PANTHER" id="PTHR43422:SF3">
    <property type="entry name" value="THIAMINE THIAZOLE SYNTHASE"/>
    <property type="match status" value="1"/>
</dbReference>
<dbReference type="Pfam" id="PF01946">
    <property type="entry name" value="Thi4"/>
    <property type="match status" value="1"/>
</dbReference>
<dbReference type="PRINTS" id="PR00368">
    <property type="entry name" value="FADPNR"/>
</dbReference>
<dbReference type="PRINTS" id="PR00411">
    <property type="entry name" value="PNDRDTASEI"/>
</dbReference>
<dbReference type="SUPFAM" id="SSF51905">
    <property type="entry name" value="FAD/NAD(P)-binding domain"/>
    <property type="match status" value="1"/>
</dbReference>
<feature type="chain" id="PRO_0000300739" description="Thiamine thiazole synthase">
    <location>
        <begin position="1"/>
        <end position="265"/>
    </location>
</feature>
<feature type="binding site" description="in other chain" evidence="1">
    <location>
        <position position="43"/>
    </location>
    <ligand>
        <name>NAD(+)</name>
        <dbReference type="ChEBI" id="CHEBI:57540"/>
        <note>ligand shared between two adjacent protomers</note>
    </ligand>
</feature>
<feature type="binding site" description="in other chain" evidence="1">
    <location>
        <begin position="62"/>
        <end position="63"/>
    </location>
    <ligand>
        <name>NAD(+)</name>
        <dbReference type="ChEBI" id="CHEBI:57540"/>
        <note>ligand shared between two adjacent protomers</note>
    </ligand>
</feature>
<feature type="binding site" description="in other chain" evidence="1">
    <location>
        <position position="70"/>
    </location>
    <ligand>
        <name>NAD(+)</name>
        <dbReference type="ChEBI" id="CHEBI:57540"/>
        <note>ligand shared between two adjacent protomers</note>
    </ligand>
</feature>
<feature type="binding site" description="in other chain" evidence="1">
    <location>
        <position position="134"/>
    </location>
    <ligand>
        <name>NAD(+)</name>
        <dbReference type="ChEBI" id="CHEBI:57540"/>
        <note>ligand shared between two adjacent protomers</note>
    </ligand>
</feature>
<feature type="binding site" evidence="1">
    <location>
        <begin position="162"/>
        <end position="164"/>
    </location>
    <ligand>
        <name>NAD(+)</name>
        <dbReference type="ChEBI" id="CHEBI:57540"/>
        <note>ligand shared between two adjacent protomers</note>
    </ligand>
</feature>
<feature type="binding site" evidence="1">
    <location>
        <position position="164"/>
    </location>
    <ligand>
        <name>Fe cation</name>
        <dbReference type="ChEBI" id="CHEBI:24875"/>
        <note>ligand shared between two adjacent protomers</note>
    </ligand>
</feature>
<feature type="binding site" description="in other chain" evidence="1">
    <location>
        <position position="179"/>
    </location>
    <ligand>
        <name>Fe cation</name>
        <dbReference type="ChEBI" id="CHEBI:24875"/>
        <note>ligand shared between two adjacent protomers</note>
    </ligand>
</feature>
<feature type="binding site" description="in other chain" evidence="1">
    <location>
        <position position="229"/>
    </location>
    <ligand>
        <name>NAD(+)</name>
        <dbReference type="ChEBI" id="CHEBI:57540"/>
        <note>ligand shared between two adjacent protomers</note>
    </ligand>
</feature>
<feature type="binding site" evidence="1">
    <location>
        <position position="239"/>
    </location>
    <ligand>
        <name>glycine</name>
        <dbReference type="ChEBI" id="CHEBI:57305"/>
    </ligand>
</feature>
<name>THI4_SULAC</name>
<keyword id="KW-0408">Iron</keyword>
<keyword id="KW-0479">Metal-binding</keyword>
<keyword id="KW-0520">NAD</keyword>
<keyword id="KW-1185">Reference proteome</keyword>
<keyword id="KW-0784">Thiamine biosynthesis</keyword>
<keyword id="KW-0808">Transferase</keyword>
<reference key="1">
    <citation type="journal article" date="2005" name="J. Bacteriol.">
        <title>The genome of Sulfolobus acidocaldarius, a model organism of the Crenarchaeota.</title>
        <authorList>
            <person name="Chen L."/>
            <person name="Bruegger K."/>
            <person name="Skovgaard M."/>
            <person name="Redder P."/>
            <person name="She Q."/>
            <person name="Torarinsson E."/>
            <person name="Greve B."/>
            <person name="Awayez M."/>
            <person name="Zibat A."/>
            <person name="Klenk H.-P."/>
            <person name="Garrett R.A."/>
        </authorList>
    </citation>
    <scope>NUCLEOTIDE SEQUENCE [LARGE SCALE GENOMIC DNA]</scope>
    <source>
        <strain>ATCC 33909 / DSM 639 / JCM 8929 / NBRC 15157 / NCIMB 11770</strain>
    </source>
</reference>
<sequence>MSDSIKIKAIDEVKISRYIIKQTMEDWMNFVENDVVIVGAGPAGMSAAYYLAKHGLKTLVFERRLSFGGGIGGGAMLFHKLVIESPADEVLKEMNIRLEKVEDGVYIVDSAEFMAKLAASAIDAGAKIIHGVTVDDVIFRENPLRVAGVAVEWTATQMAGLHVDPVFISAKAVVDATGHDAEVVAVASRKIPELGIVIPGERSAYSEMAEKLTVEQTGVVAPGLYVAGMSVTEVRGLPRMGPIFGSMVLSGKKVAEDIIKDLRNS</sequence>
<accession>Q4JAF8</accession>
<gene>
    <name evidence="1" type="primary">thi4</name>
    <name type="ordered locus">Saci_0854</name>
</gene>
<organism>
    <name type="scientific">Sulfolobus acidocaldarius (strain ATCC 33909 / DSM 639 / JCM 8929 / NBRC 15157 / NCIMB 11770)</name>
    <dbReference type="NCBI Taxonomy" id="330779"/>
    <lineage>
        <taxon>Archaea</taxon>
        <taxon>Thermoproteota</taxon>
        <taxon>Thermoprotei</taxon>
        <taxon>Sulfolobales</taxon>
        <taxon>Sulfolobaceae</taxon>
        <taxon>Sulfolobus</taxon>
    </lineage>
</organism>
<evidence type="ECO:0000255" key="1">
    <source>
        <dbReference type="HAMAP-Rule" id="MF_00304"/>
    </source>
</evidence>